<evidence type="ECO:0000255" key="1"/>
<dbReference type="EMBL" id="CU329670">
    <property type="protein sequence ID" value="CAB63551.1"/>
    <property type="molecule type" value="Genomic_DNA"/>
</dbReference>
<dbReference type="PIR" id="T50269">
    <property type="entry name" value="T50269"/>
</dbReference>
<dbReference type="RefSeq" id="NP_595004.1">
    <property type="nucleotide sequence ID" value="NM_001020435.2"/>
</dbReference>
<dbReference type="BioGRID" id="279977">
    <property type="interactions" value="18"/>
</dbReference>
<dbReference type="STRING" id="284812.Q9URX2"/>
<dbReference type="iPTMnet" id="Q9URX2"/>
<dbReference type="PaxDb" id="4896-SPAC922.04.1"/>
<dbReference type="EnsemblFungi" id="SPAC922.04.1">
    <property type="protein sequence ID" value="SPAC922.04.1:pep"/>
    <property type="gene ID" value="SPAC922.04"/>
</dbReference>
<dbReference type="KEGG" id="spo:2543561"/>
<dbReference type="PomBase" id="SPAC922.04"/>
<dbReference type="VEuPathDB" id="FungiDB:SPAC922.04"/>
<dbReference type="HOGENOM" id="CLU_2251621_0_0_1"/>
<dbReference type="InParanoid" id="Q9URX2"/>
<dbReference type="OMA" id="YDDINCK"/>
<dbReference type="PRO" id="PR:Q9URX2"/>
<dbReference type="Proteomes" id="UP000002485">
    <property type="component" value="Chromosome I"/>
</dbReference>
<dbReference type="GO" id="GO:0005737">
    <property type="term" value="C:cytoplasm"/>
    <property type="evidence" value="ECO:0007005"/>
    <property type="project" value="PomBase"/>
</dbReference>
<dbReference type="GO" id="GO:0005829">
    <property type="term" value="C:cytosol"/>
    <property type="evidence" value="ECO:0007005"/>
    <property type="project" value="PomBase"/>
</dbReference>
<feature type="signal peptide" evidence="1">
    <location>
        <begin position="1"/>
        <end position="18"/>
    </location>
</feature>
<feature type="chain" id="PRO_0000014213" description="Uncharacterized protein C922.04">
    <location>
        <begin position="19"/>
        <end position="117"/>
    </location>
</feature>
<feature type="glycosylation site" description="N-linked (GlcNAc...) asparagine" evidence="1">
    <location>
        <position position="86"/>
    </location>
</feature>
<accession>Q9URX2</accession>
<organism>
    <name type="scientific">Schizosaccharomyces pombe (strain 972 / ATCC 24843)</name>
    <name type="common">Fission yeast</name>
    <dbReference type="NCBI Taxonomy" id="284812"/>
    <lineage>
        <taxon>Eukaryota</taxon>
        <taxon>Fungi</taxon>
        <taxon>Dikarya</taxon>
        <taxon>Ascomycota</taxon>
        <taxon>Taphrinomycotina</taxon>
        <taxon>Schizosaccharomycetes</taxon>
        <taxon>Schizosaccharomycetales</taxon>
        <taxon>Schizosaccharomycetaceae</taxon>
        <taxon>Schizosaccharomyces</taxon>
    </lineage>
</organism>
<name>YLX4_SCHPO</name>
<protein>
    <recommendedName>
        <fullName>Uncharacterized protein C922.04</fullName>
    </recommendedName>
</protein>
<reference key="1">
    <citation type="journal article" date="2002" name="Nature">
        <title>The genome sequence of Schizosaccharomyces pombe.</title>
        <authorList>
            <person name="Wood V."/>
            <person name="Gwilliam R."/>
            <person name="Rajandream M.A."/>
            <person name="Lyne M.H."/>
            <person name="Lyne R."/>
            <person name="Stewart A."/>
            <person name="Sgouros J.G."/>
            <person name="Peat N."/>
            <person name="Hayles J."/>
            <person name="Baker S.G."/>
            <person name="Basham D."/>
            <person name="Bowman S."/>
            <person name="Brooks K."/>
            <person name="Brown D."/>
            <person name="Brown S."/>
            <person name="Chillingworth T."/>
            <person name="Churcher C.M."/>
            <person name="Collins M."/>
            <person name="Connor R."/>
            <person name="Cronin A."/>
            <person name="Davis P."/>
            <person name="Feltwell T."/>
            <person name="Fraser A."/>
            <person name="Gentles S."/>
            <person name="Goble A."/>
            <person name="Hamlin N."/>
            <person name="Harris D.E."/>
            <person name="Hidalgo J."/>
            <person name="Hodgson G."/>
            <person name="Holroyd S."/>
            <person name="Hornsby T."/>
            <person name="Howarth S."/>
            <person name="Huckle E.J."/>
            <person name="Hunt S."/>
            <person name="Jagels K."/>
            <person name="James K.D."/>
            <person name="Jones L."/>
            <person name="Jones M."/>
            <person name="Leather S."/>
            <person name="McDonald S."/>
            <person name="McLean J."/>
            <person name="Mooney P."/>
            <person name="Moule S."/>
            <person name="Mungall K.L."/>
            <person name="Murphy L.D."/>
            <person name="Niblett D."/>
            <person name="Odell C."/>
            <person name="Oliver K."/>
            <person name="O'Neil S."/>
            <person name="Pearson D."/>
            <person name="Quail M.A."/>
            <person name="Rabbinowitsch E."/>
            <person name="Rutherford K.M."/>
            <person name="Rutter S."/>
            <person name="Saunders D."/>
            <person name="Seeger K."/>
            <person name="Sharp S."/>
            <person name="Skelton J."/>
            <person name="Simmonds M.N."/>
            <person name="Squares R."/>
            <person name="Squares S."/>
            <person name="Stevens K."/>
            <person name="Taylor K."/>
            <person name="Taylor R.G."/>
            <person name="Tivey A."/>
            <person name="Walsh S.V."/>
            <person name="Warren T."/>
            <person name="Whitehead S."/>
            <person name="Woodward J.R."/>
            <person name="Volckaert G."/>
            <person name="Aert R."/>
            <person name="Robben J."/>
            <person name="Grymonprez B."/>
            <person name="Weltjens I."/>
            <person name="Vanstreels E."/>
            <person name="Rieger M."/>
            <person name="Schaefer M."/>
            <person name="Mueller-Auer S."/>
            <person name="Gabel C."/>
            <person name="Fuchs M."/>
            <person name="Duesterhoeft A."/>
            <person name="Fritzc C."/>
            <person name="Holzer E."/>
            <person name="Moestl D."/>
            <person name="Hilbert H."/>
            <person name="Borzym K."/>
            <person name="Langer I."/>
            <person name="Beck A."/>
            <person name="Lehrach H."/>
            <person name="Reinhardt R."/>
            <person name="Pohl T.M."/>
            <person name="Eger P."/>
            <person name="Zimmermann W."/>
            <person name="Wedler H."/>
            <person name="Wambutt R."/>
            <person name="Purnelle B."/>
            <person name="Goffeau A."/>
            <person name="Cadieu E."/>
            <person name="Dreano S."/>
            <person name="Gloux S."/>
            <person name="Lelaure V."/>
            <person name="Mottier S."/>
            <person name="Galibert F."/>
            <person name="Aves S.J."/>
            <person name="Xiang Z."/>
            <person name="Hunt C."/>
            <person name="Moore K."/>
            <person name="Hurst S.M."/>
            <person name="Lucas M."/>
            <person name="Rochet M."/>
            <person name="Gaillardin C."/>
            <person name="Tallada V.A."/>
            <person name="Garzon A."/>
            <person name="Thode G."/>
            <person name="Daga R.R."/>
            <person name="Cruzado L."/>
            <person name="Jimenez J."/>
            <person name="Sanchez M."/>
            <person name="del Rey F."/>
            <person name="Benito J."/>
            <person name="Dominguez A."/>
            <person name="Revuelta J.L."/>
            <person name="Moreno S."/>
            <person name="Armstrong J."/>
            <person name="Forsburg S.L."/>
            <person name="Cerutti L."/>
            <person name="Lowe T."/>
            <person name="McCombie W.R."/>
            <person name="Paulsen I."/>
            <person name="Potashkin J."/>
            <person name="Shpakovski G.V."/>
            <person name="Ussery D."/>
            <person name="Barrell B.G."/>
            <person name="Nurse P."/>
        </authorList>
    </citation>
    <scope>NUCLEOTIDE SEQUENCE [LARGE SCALE GENOMIC DNA]</scope>
    <source>
        <strain>972 / ATCC 24843</strain>
    </source>
</reference>
<sequence length="117" mass="12817">MKFFWVSSLLGLLGLSTAIPLSTEADALLDRKTIYFGMKAYDDVNCKGSTSYTISFNKCQAYPNINSINALTDGAVCTVYVYSSNNCTGEPVFQTDSDGIECINVDAFETGSWKFKC</sequence>
<gene>
    <name type="ORF">SPAC922.04</name>
</gene>
<proteinExistence type="inferred from homology"/>
<keyword id="KW-0325">Glycoprotein</keyword>
<keyword id="KW-1185">Reference proteome</keyword>
<keyword id="KW-0732">Signal</keyword>